<name>HBA_PANPS</name>
<accession>P18976</accession>
<sequence>VLSSADKNNVKACWGKIGSHAGEYGAEALERTFCSFPTTKTYFPHFDLSHGSAQVQTHGQKVADALTKAVAHINDLPNALSDLSDLHAYKLRVDPVNFKFLSHCLLVTLACHHPEEFTPAVHASLDKFFSAVSTVLTSKYR</sequence>
<comment type="function">
    <text>Involved in oxygen transport from the lung to the various peripheral tissues.</text>
</comment>
<comment type="function">
    <molecule>Hemopressin</molecule>
    <text evidence="2">Hemopressin acts as an antagonist peptide of the cannabinoid receptor CNR1. Hemopressin-binding efficiently blocks cannabinoid receptor CNR1 and subsequent signaling.</text>
</comment>
<comment type="subunit">
    <text>Heterotetramer of two alpha chains and two beta chains.</text>
</comment>
<comment type="tissue specificity">
    <text>Red blood cells.</text>
</comment>
<comment type="similarity">
    <text evidence="4">Belongs to the globin family.</text>
</comment>
<feature type="chain" id="PRO_0000052719" description="Hemoglobin subunit alpha">
    <location>
        <begin position="1"/>
        <end position="141"/>
    </location>
</feature>
<feature type="peptide" id="PRO_0000455919" description="Hemopressin" evidence="2">
    <location>
        <begin position="95"/>
        <end position="103"/>
    </location>
</feature>
<feature type="domain" description="Globin" evidence="4">
    <location>
        <begin position="1"/>
        <end position="141"/>
    </location>
</feature>
<feature type="binding site" evidence="4">
    <location>
        <position position="58"/>
    </location>
    <ligand>
        <name>O2</name>
        <dbReference type="ChEBI" id="CHEBI:15379"/>
    </ligand>
</feature>
<feature type="binding site" description="proximal binding residue" evidence="4">
    <location>
        <position position="87"/>
    </location>
    <ligand>
        <name>heme b</name>
        <dbReference type="ChEBI" id="CHEBI:60344"/>
    </ligand>
    <ligandPart>
        <name>Fe</name>
        <dbReference type="ChEBI" id="CHEBI:18248"/>
    </ligandPart>
</feature>
<feature type="modified residue" description="Phosphoserine" evidence="3">
    <location>
        <position position="3"/>
    </location>
</feature>
<feature type="modified residue" description="N6-succinyllysine" evidence="1">
    <location>
        <position position="7"/>
    </location>
</feature>
<feature type="modified residue" description="N6-succinyllysine" evidence="1">
    <location>
        <position position="11"/>
    </location>
</feature>
<feature type="modified residue" description="N6-acetyllysine; alternate" evidence="3">
    <location>
        <position position="16"/>
    </location>
</feature>
<feature type="modified residue" description="N6-succinyllysine; alternate" evidence="1">
    <location>
        <position position="16"/>
    </location>
</feature>
<feature type="modified residue" description="Phosphotyrosine" evidence="3">
    <location>
        <position position="24"/>
    </location>
</feature>
<feature type="modified residue" description="Phosphoserine" evidence="3">
    <location>
        <position position="35"/>
    </location>
</feature>
<feature type="modified residue" description="N6-succinyllysine" evidence="1">
    <location>
        <position position="40"/>
    </location>
</feature>
<feature type="modified residue" description="Phosphoserine" evidence="3">
    <location>
        <position position="49"/>
    </location>
</feature>
<feature type="modified residue" description="Phosphoserine" evidence="1">
    <location>
        <position position="102"/>
    </location>
</feature>
<feature type="modified residue" description="Phosphothreonine" evidence="1">
    <location>
        <position position="108"/>
    </location>
</feature>
<feature type="modified residue" description="Phosphoserine" evidence="1">
    <location>
        <position position="124"/>
    </location>
</feature>
<feature type="modified residue" description="Phosphothreonine" evidence="1">
    <location>
        <position position="134"/>
    </location>
</feature>
<feature type="modified residue" description="Phosphothreonine" evidence="1">
    <location>
        <position position="137"/>
    </location>
</feature>
<feature type="modified residue" description="Phosphoserine" evidence="1">
    <location>
        <position position="138"/>
    </location>
</feature>
<gene>
    <name type="primary">HBA</name>
</gene>
<reference key="1">
    <citation type="journal article" date="1988" name="Z. Naturforsch. C">
        <title>Carnivora: the primary structure of the major and minor hemoglobin components of adult north Persian leopard (Panthera pardus sexicolor).</title>
        <authorList>
            <person name="Ahmed A."/>
            <person name="Jahan M."/>
            <person name="Braunitzer G."/>
            <person name="Goeltenboth R."/>
        </authorList>
    </citation>
    <scope>PROTEIN SEQUENCE</scope>
</reference>
<organism>
    <name type="scientific">Panthera pardus saxicolor</name>
    <name type="common">Northern Persian leopard</name>
    <dbReference type="NCBI Taxonomy" id="9693"/>
    <lineage>
        <taxon>Eukaryota</taxon>
        <taxon>Metazoa</taxon>
        <taxon>Chordata</taxon>
        <taxon>Craniata</taxon>
        <taxon>Vertebrata</taxon>
        <taxon>Euteleostomi</taxon>
        <taxon>Mammalia</taxon>
        <taxon>Eutheria</taxon>
        <taxon>Laurasiatheria</taxon>
        <taxon>Carnivora</taxon>
        <taxon>Feliformia</taxon>
        <taxon>Felidae</taxon>
        <taxon>Pantherinae</taxon>
        <taxon>Panthera</taxon>
    </lineage>
</organism>
<keyword id="KW-0007">Acetylation</keyword>
<keyword id="KW-0903">Direct protein sequencing</keyword>
<keyword id="KW-0349">Heme</keyword>
<keyword id="KW-0408">Iron</keyword>
<keyword id="KW-0479">Metal-binding</keyword>
<keyword id="KW-0561">Oxygen transport</keyword>
<keyword id="KW-0597">Phosphoprotein</keyword>
<keyword id="KW-0813">Transport</keyword>
<proteinExistence type="evidence at protein level"/>
<evidence type="ECO:0000250" key="1">
    <source>
        <dbReference type="UniProtKB" id="P01942"/>
    </source>
</evidence>
<evidence type="ECO:0000250" key="2">
    <source>
        <dbReference type="UniProtKB" id="P01946"/>
    </source>
</evidence>
<evidence type="ECO:0000250" key="3">
    <source>
        <dbReference type="UniProtKB" id="P69905"/>
    </source>
</evidence>
<evidence type="ECO:0000255" key="4">
    <source>
        <dbReference type="PROSITE-ProRule" id="PRU00238"/>
    </source>
</evidence>
<protein>
    <recommendedName>
        <fullName>Hemoglobin subunit alpha</fullName>
    </recommendedName>
    <alternativeName>
        <fullName>Alpha-globin</fullName>
    </alternativeName>
    <alternativeName>
        <fullName>Hemoglobin alpha chain</fullName>
    </alternativeName>
    <component>
        <recommendedName>
            <fullName evidence="2">Hemopressin</fullName>
        </recommendedName>
    </component>
</protein>
<dbReference type="PIR" id="S03927">
    <property type="entry name" value="HAPDP"/>
</dbReference>
<dbReference type="SMR" id="P18976"/>
<dbReference type="GO" id="GO:0072562">
    <property type="term" value="C:blood microparticle"/>
    <property type="evidence" value="ECO:0007669"/>
    <property type="project" value="TreeGrafter"/>
</dbReference>
<dbReference type="GO" id="GO:0031838">
    <property type="term" value="C:haptoglobin-hemoglobin complex"/>
    <property type="evidence" value="ECO:0007669"/>
    <property type="project" value="TreeGrafter"/>
</dbReference>
<dbReference type="GO" id="GO:0005833">
    <property type="term" value="C:hemoglobin complex"/>
    <property type="evidence" value="ECO:0007669"/>
    <property type="project" value="InterPro"/>
</dbReference>
<dbReference type="GO" id="GO:0031720">
    <property type="term" value="F:haptoglobin binding"/>
    <property type="evidence" value="ECO:0007669"/>
    <property type="project" value="TreeGrafter"/>
</dbReference>
<dbReference type="GO" id="GO:0020037">
    <property type="term" value="F:heme binding"/>
    <property type="evidence" value="ECO:0007669"/>
    <property type="project" value="InterPro"/>
</dbReference>
<dbReference type="GO" id="GO:0005506">
    <property type="term" value="F:iron ion binding"/>
    <property type="evidence" value="ECO:0007669"/>
    <property type="project" value="InterPro"/>
</dbReference>
<dbReference type="GO" id="GO:0043177">
    <property type="term" value="F:organic acid binding"/>
    <property type="evidence" value="ECO:0007669"/>
    <property type="project" value="TreeGrafter"/>
</dbReference>
<dbReference type="GO" id="GO:0019825">
    <property type="term" value="F:oxygen binding"/>
    <property type="evidence" value="ECO:0007669"/>
    <property type="project" value="InterPro"/>
</dbReference>
<dbReference type="GO" id="GO:0005344">
    <property type="term" value="F:oxygen carrier activity"/>
    <property type="evidence" value="ECO:0007669"/>
    <property type="project" value="UniProtKB-KW"/>
</dbReference>
<dbReference type="GO" id="GO:0004601">
    <property type="term" value="F:peroxidase activity"/>
    <property type="evidence" value="ECO:0007669"/>
    <property type="project" value="TreeGrafter"/>
</dbReference>
<dbReference type="GO" id="GO:0042744">
    <property type="term" value="P:hydrogen peroxide catabolic process"/>
    <property type="evidence" value="ECO:0007669"/>
    <property type="project" value="TreeGrafter"/>
</dbReference>
<dbReference type="CDD" id="cd08927">
    <property type="entry name" value="Hb-alpha-like"/>
    <property type="match status" value="1"/>
</dbReference>
<dbReference type="FunFam" id="1.10.490.10:FF:000002">
    <property type="entry name" value="Hemoglobin subunit alpha"/>
    <property type="match status" value="1"/>
</dbReference>
<dbReference type="Gene3D" id="1.10.490.10">
    <property type="entry name" value="Globins"/>
    <property type="match status" value="1"/>
</dbReference>
<dbReference type="InterPro" id="IPR000971">
    <property type="entry name" value="Globin"/>
</dbReference>
<dbReference type="InterPro" id="IPR009050">
    <property type="entry name" value="Globin-like_sf"/>
</dbReference>
<dbReference type="InterPro" id="IPR012292">
    <property type="entry name" value="Globin/Proto"/>
</dbReference>
<dbReference type="InterPro" id="IPR002338">
    <property type="entry name" value="Hemoglobin_a-typ"/>
</dbReference>
<dbReference type="InterPro" id="IPR050056">
    <property type="entry name" value="Hemoglobin_oxygen_transport"/>
</dbReference>
<dbReference type="InterPro" id="IPR002339">
    <property type="entry name" value="Hemoglobin_pi"/>
</dbReference>
<dbReference type="PANTHER" id="PTHR11442">
    <property type="entry name" value="HEMOGLOBIN FAMILY MEMBER"/>
    <property type="match status" value="1"/>
</dbReference>
<dbReference type="PANTHER" id="PTHR11442:SF48">
    <property type="entry name" value="HEMOGLOBIN SUBUNIT ALPHA"/>
    <property type="match status" value="1"/>
</dbReference>
<dbReference type="Pfam" id="PF00042">
    <property type="entry name" value="Globin"/>
    <property type="match status" value="1"/>
</dbReference>
<dbReference type="PRINTS" id="PR00612">
    <property type="entry name" value="ALPHAHAEM"/>
</dbReference>
<dbReference type="PRINTS" id="PR00815">
    <property type="entry name" value="PIHAEM"/>
</dbReference>
<dbReference type="SUPFAM" id="SSF46458">
    <property type="entry name" value="Globin-like"/>
    <property type="match status" value="1"/>
</dbReference>
<dbReference type="PROSITE" id="PS01033">
    <property type="entry name" value="GLOBIN"/>
    <property type="match status" value="1"/>
</dbReference>